<proteinExistence type="evidence at protein level"/>
<protein>
    <recommendedName>
        <fullName>Dolichyl-diphosphooligosaccharide--protein glycosyltransferase subunit TMEM258</fullName>
        <shortName>Oligosaccharyl transferase subunit TMEM258</shortName>
    </recommendedName>
    <alternativeName>
        <fullName evidence="5">Transmembrane protein 258</fullName>
    </alternativeName>
</protein>
<keyword id="KW-0007">Acetylation</keyword>
<keyword id="KW-0963">Cytoplasm</keyword>
<keyword id="KW-0256">Endoplasmic reticulum</keyword>
<keyword id="KW-0472">Membrane</keyword>
<keyword id="KW-1185">Reference proteome</keyword>
<keyword id="KW-0812">Transmembrane</keyword>
<keyword id="KW-1133">Transmembrane helix</keyword>
<reference key="1">
    <citation type="journal article" date="2005" name="Science">
        <title>The transcriptional landscape of the mammalian genome.</title>
        <authorList>
            <person name="Carninci P."/>
            <person name="Kasukawa T."/>
            <person name="Katayama S."/>
            <person name="Gough J."/>
            <person name="Frith M.C."/>
            <person name="Maeda N."/>
            <person name="Oyama R."/>
            <person name="Ravasi T."/>
            <person name="Lenhard B."/>
            <person name="Wells C."/>
            <person name="Kodzius R."/>
            <person name="Shimokawa K."/>
            <person name="Bajic V.B."/>
            <person name="Brenner S.E."/>
            <person name="Batalov S."/>
            <person name="Forrest A.R."/>
            <person name="Zavolan M."/>
            <person name="Davis M.J."/>
            <person name="Wilming L.G."/>
            <person name="Aidinis V."/>
            <person name="Allen J.E."/>
            <person name="Ambesi-Impiombato A."/>
            <person name="Apweiler R."/>
            <person name="Aturaliya R.N."/>
            <person name="Bailey T.L."/>
            <person name="Bansal M."/>
            <person name="Baxter L."/>
            <person name="Beisel K.W."/>
            <person name="Bersano T."/>
            <person name="Bono H."/>
            <person name="Chalk A.M."/>
            <person name="Chiu K.P."/>
            <person name="Choudhary V."/>
            <person name="Christoffels A."/>
            <person name="Clutterbuck D.R."/>
            <person name="Crowe M.L."/>
            <person name="Dalla E."/>
            <person name="Dalrymple B.P."/>
            <person name="de Bono B."/>
            <person name="Della Gatta G."/>
            <person name="di Bernardo D."/>
            <person name="Down T."/>
            <person name="Engstrom P."/>
            <person name="Fagiolini M."/>
            <person name="Faulkner G."/>
            <person name="Fletcher C.F."/>
            <person name="Fukushima T."/>
            <person name="Furuno M."/>
            <person name="Futaki S."/>
            <person name="Gariboldi M."/>
            <person name="Georgii-Hemming P."/>
            <person name="Gingeras T.R."/>
            <person name="Gojobori T."/>
            <person name="Green R.E."/>
            <person name="Gustincich S."/>
            <person name="Harbers M."/>
            <person name="Hayashi Y."/>
            <person name="Hensch T.K."/>
            <person name="Hirokawa N."/>
            <person name="Hill D."/>
            <person name="Huminiecki L."/>
            <person name="Iacono M."/>
            <person name="Ikeo K."/>
            <person name="Iwama A."/>
            <person name="Ishikawa T."/>
            <person name="Jakt M."/>
            <person name="Kanapin A."/>
            <person name="Katoh M."/>
            <person name="Kawasawa Y."/>
            <person name="Kelso J."/>
            <person name="Kitamura H."/>
            <person name="Kitano H."/>
            <person name="Kollias G."/>
            <person name="Krishnan S.P."/>
            <person name="Kruger A."/>
            <person name="Kummerfeld S.K."/>
            <person name="Kurochkin I.V."/>
            <person name="Lareau L.F."/>
            <person name="Lazarevic D."/>
            <person name="Lipovich L."/>
            <person name="Liu J."/>
            <person name="Liuni S."/>
            <person name="McWilliam S."/>
            <person name="Madan Babu M."/>
            <person name="Madera M."/>
            <person name="Marchionni L."/>
            <person name="Matsuda H."/>
            <person name="Matsuzawa S."/>
            <person name="Miki H."/>
            <person name="Mignone F."/>
            <person name="Miyake S."/>
            <person name="Morris K."/>
            <person name="Mottagui-Tabar S."/>
            <person name="Mulder N."/>
            <person name="Nakano N."/>
            <person name="Nakauchi H."/>
            <person name="Ng P."/>
            <person name="Nilsson R."/>
            <person name="Nishiguchi S."/>
            <person name="Nishikawa S."/>
            <person name="Nori F."/>
            <person name="Ohara O."/>
            <person name="Okazaki Y."/>
            <person name="Orlando V."/>
            <person name="Pang K.C."/>
            <person name="Pavan W.J."/>
            <person name="Pavesi G."/>
            <person name="Pesole G."/>
            <person name="Petrovsky N."/>
            <person name="Piazza S."/>
            <person name="Reed J."/>
            <person name="Reid J.F."/>
            <person name="Ring B.Z."/>
            <person name="Ringwald M."/>
            <person name="Rost B."/>
            <person name="Ruan Y."/>
            <person name="Salzberg S.L."/>
            <person name="Sandelin A."/>
            <person name="Schneider C."/>
            <person name="Schoenbach C."/>
            <person name="Sekiguchi K."/>
            <person name="Semple C.A."/>
            <person name="Seno S."/>
            <person name="Sessa L."/>
            <person name="Sheng Y."/>
            <person name="Shibata Y."/>
            <person name="Shimada H."/>
            <person name="Shimada K."/>
            <person name="Silva D."/>
            <person name="Sinclair B."/>
            <person name="Sperling S."/>
            <person name="Stupka E."/>
            <person name="Sugiura K."/>
            <person name="Sultana R."/>
            <person name="Takenaka Y."/>
            <person name="Taki K."/>
            <person name="Tammoja K."/>
            <person name="Tan S.L."/>
            <person name="Tang S."/>
            <person name="Taylor M.S."/>
            <person name="Tegner J."/>
            <person name="Teichmann S.A."/>
            <person name="Ueda H.R."/>
            <person name="van Nimwegen E."/>
            <person name="Verardo R."/>
            <person name="Wei C.L."/>
            <person name="Yagi K."/>
            <person name="Yamanishi H."/>
            <person name="Zabarovsky E."/>
            <person name="Zhu S."/>
            <person name="Zimmer A."/>
            <person name="Hide W."/>
            <person name="Bult C."/>
            <person name="Grimmond S.M."/>
            <person name="Teasdale R.D."/>
            <person name="Liu E.T."/>
            <person name="Brusic V."/>
            <person name="Quackenbush J."/>
            <person name="Wahlestedt C."/>
            <person name="Mattick J.S."/>
            <person name="Hume D.A."/>
            <person name="Kai C."/>
            <person name="Sasaki D."/>
            <person name="Tomaru Y."/>
            <person name="Fukuda S."/>
            <person name="Kanamori-Katayama M."/>
            <person name="Suzuki M."/>
            <person name="Aoki J."/>
            <person name="Arakawa T."/>
            <person name="Iida J."/>
            <person name="Imamura K."/>
            <person name="Itoh M."/>
            <person name="Kato T."/>
            <person name="Kawaji H."/>
            <person name="Kawagashira N."/>
            <person name="Kawashima T."/>
            <person name="Kojima M."/>
            <person name="Kondo S."/>
            <person name="Konno H."/>
            <person name="Nakano K."/>
            <person name="Ninomiya N."/>
            <person name="Nishio T."/>
            <person name="Okada M."/>
            <person name="Plessy C."/>
            <person name="Shibata K."/>
            <person name="Shiraki T."/>
            <person name="Suzuki S."/>
            <person name="Tagami M."/>
            <person name="Waki K."/>
            <person name="Watahiki A."/>
            <person name="Okamura-Oho Y."/>
            <person name="Suzuki H."/>
            <person name="Kawai J."/>
            <person name="Hayashizaki Y."/>
        </authorList>
    </citation>
    <scope>NUCLEOTIDE SEQUENCE [LARGE SCALE MRNA]</scope>
    <source>
        <strain>C57BL/6J</strain>
        <tissue>Pancreas</tissue>
    </source>
</reference>
<reference key="2">
    <citation type="journal article" date="2016" name="Cell Rep.">
        <title>TMEM258 is a component of the oligosaccharyltransferase complex controlling ER stress and intestinal inflammation.</title>
        <authorList>
            <person name="Graham D.B."/>
            <person name="Lefkovith A."/>
            <person name="Deelen P."/>
            <person name="de Klein N."/>
            <person name="Varma M."/>
            <person name="Boroughs A."/>
            <person name="Desch A.N."/>
            <person name="Ng A.C."/>
            <person name="Guzman G."/>
            <person name="Schenone M."/>
            <person name="Petersen C.P."/>
            <person name="Bhan A.K."/>
            <person name="Rivas M.A."/>
            <person name="Daly M.J."/>
            <person name="Carr S.A."/>
            <person name="Wijmenga C."/>
            <person name="Xavier R.J."/>
        </authorList>
    </citation>
    <scope>FUNCTION</scope>
    <scope>IDENTIFICATION IN THE OLIGOSACCHARYLTRANSFERASE COMPLEX</scope>
</reference>
<feature type="chain" id="PRO_0000221143" description="Dolichyl-diphosphooligosaccharide--protein glycosyltransferase subunit TMEM258">
    <location>
        <begin position="1"/>
        <end position="79"/>
    </location>
</feature>
<feature type="transmembrane region" description="Helical" evidence="3">
    <location>
        <begin position="17"/>
        <end position="37"/>
    </location>
</feature>
<feature type="transmembrane region" description="Helical" evidence="3">
    <location>
        <begin position="55"/>
        <end position="75"/>
    </location>
</feature>
<feature type="modified residue" description="N-acetylmethionine" evidence="2">
    <location>
        <position position="1"/>
    </location>
</feature>
<organism>
    <name type="scientific">Mus musculus</name>
    <name type="common">Mouse</name>
    <dbReference type="NCBI Taxonomy" id="10090"/>
    <lineage>
        <taxon>Eukaryota</taxon>
        <taxon>Metazoa</taxon>
        <taxon>Chordata</taxon>
        <taxon>Craniata</taxon>
        <taxon>Vertebrata</taxon>
        <taxon>Euteleostomi</taxon>
        <taxon>Mammalia</taxon>
        <taxon>Eutheria</taxon>
        <taxon>Euarchontoglires</taxon>
        <taxon>Glires</taxon>
        <taxon>Rodentia</taxon>
        <taxon>Myomorpha</taxon>
        <taxon>Muroidea</taxon>
        <taxon>Muridae</taxon>
        <taxon>Murinae</taxon>
        <taxon>Mus</taxon>
        <taxon>Mus</taxon>
    </lineage>
</organism>
<accession>P61166</accession>
<accession>Q9D953</accession>
<accession>Q9Y2Q7</accession>
<sequence length="79" mass="9079">MELEAMSRYTSPVNPAVFPHLTVVLLAIGMFFTAWFFVYEVTSTKYTRDIYKELLISLVASLFMGFGVLFLLLWVGIYV</sequence>
<dbReference type="EMBL" id="AK007351">
    <property type="protein sequence ID" value="BAB24978.1"/>
    <property type="molecule type" value="mRNA"/>
</dbReference>
<dbReference type="CCDS" id="CCDS50385.1"/>
<dbReference type="RefSeq" id="NP_081195.1">
    <property type="nucleotide sequence ID" value="NM_026919.1"/>
</dbReference>
<dbReference type="SMR" id="P61166"/>
<dbReference type="ComplexPortal" id="CPX-5821">
    <property type="entry name" value="Oligosaccharyltransferase complex A"/>
</dbReference>
<dbReference type="ComplexPortal" id="CPX-5822">
    <property type="entry name" value="Oligosaccharyltransferase complex B, MAGT1 variant"/>
</dbReference>
<dbReference type="ComplexPortal" id="CPX-8739">
    <property type="entry name" value="Oligosaccharyltransferase complex B, TUSC3 variant"/>
</dbReference>
<dbReference type="FunCoup" id="P61166">
    <property type="interactions" value="1298"/>
</dbReference>
<dbReference type="STRING" id="10090.ENSMUSP00000044751"/>
<dbReference type="PhosphoSitePlus" id="P61166"/>
<dbReference type="PaxDb" id="10090-ENSMUSP00000044751"/>
<dbReference type="PeptideAtlas" id="P61166"/>
<dbReference type="ProteomicsDB" id="260694"/>
<dbReference type="Pumba" id="P61166"/>
<dbReference type="TopDownProteomics" id="P61166"/>
<dbReference type="Antibodypedia" id="51765">
    <property type="antibodies" value="9 antibodies from 7 providers"/>
</dbReference>
<dbReference type="Ensembl" id="ENSMUST00000040372.14">
    <property type="protein sequence ID" value="ENSMUSP00000044751.8"/>
    <property type="gene ID" value="ENSMUSG00000036372.15"/>
</dbReference>
<dbReference type="GeneID" id="69038"/>
<dbReference type="KEGG" id="mmu:69038"/>
<dbReference type="UCSC" id="uc008gpi.2">
    <property type="organism name" value="mouse"/>
</dbReference>
<dbReference type="AGR" id="MGI:1916288"/>
<dbReference type="CTD" id="746"/>
<dbReference type="MGI" id="MGI:1916288">
    <property type="gene designation" value="Tmem258"/>
</dbReference>
<dbReference type="VEuPathDB" id="HostDB:ENSMUSG00000036372"/>
<dbReference type="eggNOG" id="KOG4452">
    <property type="taxonomic scope" value="Eukaryota"/>
</dbReference>
<dbReference type="GeneTree" id="ENSGT00390000010089"/>
<dbReference type="InParanoid" id="P61166"/>
<dbReference type="OMA" id="MERYVGP"/>
<dbReference type="OrthoDB" id="18408at2759"/>
<dbReference type="PhylomeDB" id="P61166"/>
<dbReference type="TreeFam" id="TF300295"/>
<dbReference type="UniPathway" id="UPA00378"/>
<dbReference type="BioGRID-ORCS" id="69038">
    <property type="hits" value="20 hits in 79 CRISPR screens"/>
</dbReference>
<dbReference type="ChiTaRS" id="Tmem258">
    <property type="organism name" value="mouse"/>
</dbReference>
<dbReference type="PRO" id="PR:P61166"/>
<dbReference type="Proteomes" id="UP000000589">
    <property type="component" value="Chromosome 19"/>
</dbReference>
<dbReference type="RNAct" id="P61166">
    <property type="molecule type" value="protein"/>
</dbReference>
<dbReference type="Bgee" id="ENSMUSG00000036372">
    <property type="expression patterns" value="Expressed in dorsal pancreas and 78 other cell types or tissues"/>
</dbReference>
<dbReference type="ExpressionAtlas" id="P61166">
    <property type="expression patterns" value="baseline and differential"/>
</dbReference>
<dbReference type="GO" id="GO:0005737">
    <property type="term" value="C:cytoplasm"/>
    <property type="evidence" value="ECO:0000250"/>
    <property type="project" value="UniProtKB"/>
</dbReference>
<dbReference type="GO" id="GO:0005783">
    <property type="term" value="C:endoplasmic reticulum"/>
    <property type="evidence" value="ECO:0000266"/>
    <property type="project" value="MGI"/>
</dbReference>
<dbReference type="GO" id="GO:0005789">
    <property type="term" value="C:endoplasmic reticulum membrane"/>
    <property type="evidence" value="ECO:0000303"/>
    <property type="project" value="ComplexPortal"/>
</dbReference>
<dbReference type="GO" id="GO:0016020">
    <property type="term" value="C:membrane"/>
    <property type="evidence" value="ECO:0000250"/>
    <property type="project" value="UniProtKB"/>
</dbReference>
<dbReference type="GO" id="GO:0008250">
    <property type="term" value="C:oligosaccharyltransferase complex"/>
    <property type="evidence" value="ECO:0000303"/>
    <property type="project" value="ComplexPortal"/>
</dbReference>
<dbReference type="GO" id="GO:0160226">
    <property type="term" value="C:oligosaccharyltransferase complex A"/>
    <property type="evidence" value="ECO:0007669"/>
    <property type="project" value="Ensembl"/>
</dbReference>
<dbReference type="GO" id="GO:0160227">
    <property type="term" value="C:oligosaccharyltransferase complex B"/>
    <property type="evidence" value="ECO:0007669"/>
    <property type="project" value="Ensembl"/>
</dbReference>
<dbReference type="GO" id="GO:0062062">
    <property type="term" value="F:oligosaccharyltransferase complex binding"/>
    <property type="evidence" value="ECO:0000314"/>
    <property type="project" value="MGI"/>
</dbReference>
<dbReference type="GO" id="GO:1904019">
    <property type="term" value="P:epithelial cell apoptotic process"/>
    <property type="evidence" value="ECO:0000315"/>
    <property type="project" value="MGI"/>
</dbReference>
<dbReference type="GO" id="GO:0006954">
    <property type="term" value="P:inflammatory response"/>
    <property type="evidence" value="ECO:0000315"/>
    <property type="project" value="MGI"/>
</dbReference>
<dbReference type="GO" id="GO:0006487">
    <property type="term" value="P:protein N-linked glycosylation"/>
    <property type="evidence" value="ECO:0000315"/>
    <property type="project" value="MGI"/>
</dbReference>
<dbReference type="GO" id="GO:0009306">
    <property type="term" value="P:protein secretion"/>
    <property type="evidence" value="ECO:0000266"/>
    <property type="project" value="MGI"/>
</dbReference>
<dbReference type="GO" id="GO:0034976">
    <property type="term" value="P:response to endoplasmic reticulum stress"/>
    <property type="evidence" value="ECO:0000315"/>
    <property type="project" value="MGI"/>
</dbReference>
<dbReference type="InterPro" id="IPR007915">
    <property type="entry name" value="TMEM258/Ost5"/>
</dbReference>
<dbReference type="PANTHER" id="PTHR13636">
    <property type="entry name" value="TRANSMEMBRANE PROTEIN 258"/>
    <property type="match status" value="1"/>
</dbReference>
<dbReference type="Pfam" id="PF05251">
    <property type="entry name" value="Ost5"/>
    <property type="match status" value="1"/>
</dbReference>
<comment type="function">
    <text evidence="2 4">Subunit of the oligosaccharyl transferase (OST) complex that catalyzes the initial transfer of a defined glycan (Glc(3)Man(9)GlcNAc(2) in eukaryotes) from the lipid carrier dolichol-pyrophosphate to an asparagine residue within an Asn-X-Ser/Thr consensus motif in nascent polypeptide chains, the first step in protein N-glycosylation (By similarity). N-glycosylation occurs cotranslationally and the complex associates with the Sec61 complex at the channel-forming translocon complex that mediates protein translocation across the endoplasmic reticulum (ER). All subunits are required for a maximal enzyme activity. Involved in ER homeostasis in the colonic epithelium.</text>
</comment>
<comment type="pathway">
    <text evidence="2">Protein modification; protein glycosylation.</text>
</comment>
<comment type="subunit">
    <text evidence="1 2 6">Component of the oligosaccharyltransferase (OST) complex (By similarity). OST exists in two different complex forms which contain common core subunits RPN1, RPN2, OST48, OST4, DAD1 and TMEM258, either STT3A or STT3B as catalytic subunits, and form-specific accessory subunits (Probable). STT3A complex assembly occurs through the formation of 3 subcomplexes. Subcomplex 1 contains RPN1 and TMEM258, subcomplex 2 contains the STT3A-specific subunits STT3A, DC2/OSTC, and KCP2 as well as the core subunit OST4, and subcomplex 3 contains RPN2, DAD1, and OST48. The STT3A complex can form stable complexes with the Sec61 complex or with both the Sec61 and TRAP complexes (By similarity).</text>
</comment>
<comment type="subcellular location">
    <subcellularLocation>
        <location evidence="2">Membrane</location>
        <topology evidence="2">Multi-pass membrane protein</topology>
    </subcellularLocation>
    <subcellularLocation>
        <location evidence="2">Endoplasmic reticulum</location>
    </subcellularLocation>
    <subcellularLocation>
        <location evidence="2">Cytoplasm</location>
    </subcellularLocation>
</comment>
<comment type="similarity">
    <text evidence="5">Belongs to the OST5 family.</text>
</comment>
<evidence type="ECO:0000250" key="1">
    <source>
        <dbReference type="UniProtKB" id="E2RKN8"/>
    </source>
</evidence>
<evidence type="ECO:0000250" key="2">
    <source>
        <dbReference type="UniProtKB" id="P61165"/>
    </source>
</evidence>
<evidence type="ECO:0000255" key="3"/>
<evidence type="ECO:0000269" key="4">
    <source>
    </source>
</evidence>
<evidence type="ECO:0000305" key="5"/>
<evidence type="ECO:0000305" key="6">
    <source>
    </source>
</evidence>
<evidence type="ECO:0000312" key="7">
    <source>
        <dbReference type="MGI" id="MGI:1916288"/>
    </source>
</evidence>
<gene>
    <name evidence="7" type="primary">Tmem258</name>
</gene>
<name>TM258_MOUSE</name>